<reference key="1">
    <citation type="journal article" date="2014" name="Stand. Genomic Sci.">
        <title>Complete genome sequence of Burkholderia phymatum STM815(T), a broad host range and efficient nitrogen-fixing symbiont of Mimosa species.</title>
        <authorList>
            <person name="Moulin L."/>
            <person name="Klonowska A."/>
            <person name="Caroline B."/>
            <person name="Booth K."/>
            <person name="Vriezen J.A."/>
            <person name="Melkonian R."/>
            <person name="James E.K."/>
            <person name="Young J.P."/>
            <person name="Bena G."/>
            <person name="Hauser L."/>
            <person name="Land M."/>
            <person name="Kyrpides N."/>
            <person name="Bruce D."/>
            <person name="Chain P."/>
            <person name="Copeland A."/>
            <person name="Pitluck S."/>
            <person name="Woyke T."/>
            <person name="Lizotte-Waniewski M."/>
            <person name="Bristow J."/>
            <person name="Riley M."/>
        </authorList>
    </citation>
    <scope>NUCLEOTIDE SEQUENCE [LARGE SCALE GENOMIC DNA]</scope>
    <source>
        <strain>DSM 17167 / CIP 108236 / LMG 21445 / STM815</strain>
    </source>
</reference>
<dbReference type="EMBL" id="CP001043">
    <property type="protein sequence ID" value="ACC71997.1"/>
    <property type="molecule type" value="Genomic_DNA"/>
</dbReference>
<dbReference type="RefSeq" id="WP_007730595.1">
    <property type="nucleotide sequence ID" value="NZ_CADFGH010000028.1"/>
</dbReference>
<dbReference type="SMR" id="B2JI51"/>
<dbReference type="STRING" id="391038.Bphy_2825"/>
<dbReference type="GeneID" id="55529979"/>
<dbReference type="KEGG" id="bph:Bphy_2825"/>
<dbReference type="eggNOG" id="COG0096">
    <property type="taxonomic scope" value="Bacteria"/>
</dbReference>
<dbReference type="HOGENOM" id="CLU_098428_0_0_4"/>
<dbReference type="OrthoDB" id="9802617at2"/>
<dbReference type="Proteomes" id="UP000001192">
    <property type="component" value="Chromosome 1"/>
</dbReference>
<dbReference type="GO" id="GO:1990904">
    <property type="term" value="C:ribonucleoprotein complex"/>
    <property type="evidence" value="ECO:0007669"/>
    <property type="project" value="UniProtKB-KW"/>
</dbReference>
<dbReference type="GO" id="GO:0005840">
    <property type="term" value="C:ribosome"/>
    <property type="evidence" value="ECO:0007669"/>
    <property type="project" value="UniProtKB-KW"/>
</dbReference>
<dbReference type="GO" id="GO:0019843">
    <property type="term" value="F:rRNA binding"/>
    <property type="evidence" value="ECO:0007669"/>
    <property type="project" value="UniProtKB-UniRule"/>
</dbReference>
<dbReference type="GO" id="GO:0003735">
    <property type="term" value="F:structural constituent of ribosome"/>
    <property type="evidence" value="ECO:0007669"/>
    <property type="project" value="InterPro"/>
</dbReference>
<dbReference type="GO" id="GO:0006412">
    <property type="term" value="P:translation"/>
    <property type="evidence" value="ECO:0007669"/>
    <property type="project" value="UniProtKB-UniRule"/>
</dbReference>
<dbReference type="FunFam" id="3.30.1370.30:FF:000003">
    <property type="entry name" value="30S ribosomal protein S8"/>
    <property type="match status" value="1"/>
</dbReference>
<dbReference type="FunFam" id="3.30.1490.10:FF:000001">
    <property type="entry name" value="30S ribosomal protein S8"/>
    <property type="match status" value="1"/>
</dbReference>
<dbReference type="Gene3D" id="3.30.1370.30">
    <property type="match status" value="1"/>
</dbReference>
<dbReference type="Gene3D" id="3.30.1490.10">
    <property type="match status" value="1"/>
</dbReference>
<dbReference type="HAMAP" id="MF_01302_B">
    <property type="entry name" value="Ribosomal_uS8_B"/>
    <property type="match status" value="1"/>
</dbReference>
<dbReference type="InterPro" id="IPR000630">
    <property type="entry name" value="Ribosomal_uS8"/>
</dbReference>
<dbReference type="InterPro" id="IPR047863">
    <property type="entry name" value="Ribosomal_uS8_CS"/>
</dbReference>
<dbReference type="InterPro" id="IPR035987">
    <property type="entry name" value="Ribosomal_uS8_sf"/>
</dbReference>
<dbReference type="NCBIfam" id="NF001109">
    <property type="entry name" value="PRK00136.1"/>
    <property type="match status" value="1"/>
</dbReference>
<dbReference type="PANTHER" id="PTHR11758">
    <property type="entry name" value="40S RIBOSOMAL PROTEIN S15A"/>
    <property type="match status" value="1"/>
</dbReference>
<dbReference type="Pfam" id="PF00410">
    <property type="entry name" value="Ribosomal_S8"/>
    <property type="match status" value="1"/>
</dbReference>
<dbReference type="SUPFAM" id="SSF56047">
    <property type="entry name" value="Ribosomal protein S8"/>
    <property type="match status" value="1"/>
</dbReference>
<dbReference type="PROSITE" id="PS00053">
    <property type="entry name" value="RIBOSOMAL_S8"/>
    <property type="match status" value="1"/>
</dbReference>
<accession>B2JI51</accession>
<name>RS8_PARP8</name>
<protein>
    <recommendedName>
        <fullName evidence="1">Small ribosomal subunit protein uS8</fullName>
    </recommendedName>
    <alternativeName>
        <fullName evidence="2">30S ribosomal protein S8</fullName>
    </alternativeName>
</protein>
<evidence type="ECO:0000255" key="1">
    <source>
        <dbReference type="HAMAP-Rule" id="MF_01302"/>
    </source>
</evidence>
<evidence type="ECO:0000305" key="2"/>
<organism>
    <name type="scientific">Paraburkholderia phymatum (strain DSM 17167 / CIP 108236 / LMG 21445 / STM815)</name>
    <name type="common">Burkholderia phymatum</name>
    <dbReference type="NCBI Taxonomy" id="391038"/>
    <lineage>
        <taxon>Bacteria</taxon>
        <taxon>Pseudomonadati</taxon>
        <taxon>Pseudomonadota</taxon>
        <taxon>Betaproteobacteria</taxon>
        <taxon>Burkholderiales</taxon>
        <taxon>Burkholderiaceae</taxon>
        <taxon>Paraburkholderia</taxon>
    </lineage>
</organism>
<gene>
    <name evidence="1" type="primary">rpsH</name>
    <name type="ordered locus">Bphy_2825</name>
</gene>
<feature type="chain" id="PRO_1000140525" description="Small ribosomal subunit protein uS8">
    <location>
        <begin position="1"/>
        <end position="131"/>
    </location>
</feature>
<comment type="function">
    <text evidence="1">One of the primary rRNA binding proteins, it binds directly to 16S rRNA central domain where it helps coordinate assembly of the platform of the 30S subunit.</text>
</comment>
<comment type="subunit">
    <text evidence="1">Part of the 30S ribosomal subunit. Contacts proteins S5 and S12.</text>
</comment>
<comment type="similarity">
    <text evidence="1">Belongs to the universal ribosomal protein uS8 family.</text>
</comment>
<sequence>MSMSDPIADMLTRIRNAQMVEKVSVTMPSSKVKVAIAQVLKDEGYIDDFAVKAEGAKSELNIALKYYAGRPVIERLERVSKPGLRVYRGRNDIPQVMNGLGVAIVSTPKGVMTDRKARATGVGGEVICYVA</sequence>
<keyword id="KW-1185">Reference proteome</keyword>
<keyword id="KW-0687">Ribonucleoprotein</keyword>
<keyword id="KW-0689">Ribosomal protein</keyword>
<keyword id="KW-0694">RNA-binding</keyword>
<keyword id="KW-0699">rRNA-binding</keyword>
<proteinExistence type="inferred from homology"/>